<sequence>MKDLVKFLKAQSKTSEDFDVIKIGLASPDMIRSWSFGEVKKPETINYRTFKPERDGLFCARIFGPVKDYECLCGKYKRLKHRGVICEKCGVEVTQTKVRRERMGHIELASPVAHIWFLKSLPSRIGLLLDMPLRDIERVLYFEMYIVTEPGMTDLERGQLLTEEQYLDAEDRWQDEFEAKMGAEAIQDLLKGMDLEAECEKLREELQETNSETKRKKITKRLKLLEAFVQSGNKPEWMVMTVLPVLPPDLRPLVPLDGGRFATSDLNDLYRRVINRNNRLKRLLDLIAPDIIVRNEKRMLQESVDALLDNGRRGRAITGSNRRPLKSLADMIKGKQGRFRQNLLGKRVDYSGRSVITVGPYLHLHQCGLPKKMALELFRPFIYAKLESRGYATTIKAAKKMVEREEAIVWDILAEVIREHPILLNRAPTLHRLGIQAFEPILIEGKAIQLHPLVCAAFNADFDGDQMAVHVPLTLEAQLEARALMMSTNNVLSPANGDPIIVPSQDVVLGLYYMTREKVNGKGEGMLLQDPREAEKAYRTGEAELHSRVKVRITEYVKNEAGEFDAKTTLTDTTIGRAILWMIAPKGMPYSLFNQTLGKKAISKLINEAYRRLGLKEAVMFADQIMYTGFAYAARSGSSVGIDDMEIPAKKYEIISAAEEEVAEIQEQFQSGLVTAGERYNKVIDIWAAANERVAKAMMENLSQEEVINREGNPEKQASFNSIFMMADSGARGSAAQIRQLAGMRGLMARPDGSIIETPITANFREGLNVLQYFISTHGARKGLADTALKTANSGYLTRRLVDVAQDLVIVEDDCGTHEGLVMTPLIEGGDEKVPLRELVLGRVAAEDILKPGTEEVLIPRNTLLDEKLCDVLDANSVDSVKVRSVVTCDTDFGVCAKCYGRDLARGHLINQGEAVGVIAAQSIGEPGTQLTMRTFHIGGAASAAAKESSVQVKNTGTVHLMNAKFVTNDESKLVLTSRNTELTITDAFGRTKEHYKVPYGAVLSKGDGQEVTAGETIANWDPHTMPVVSEVSGFVKFVDIIDGLTVTRQTDELTGLSSIVVQDVGERATAGKDLRPTIKLVDANGNDIFLPETDVLAQYFLPGKAIVSLDDGAAVKVGEPLARIPQESVGTKDITGGLPRVADLFEARKPKEPAILAEISGIVSFGKETKGKRRLLITPTEGETYEEMIPKWRQLNVFEGEMVQRGDVISDGAETPHDILRLRGVRAVTEYIVNEVQDVYRLQGVKINDKHIEVIVRQMLRKAVITKAYDSEFLEGEQVEVARVKIVNRQREAEGKPPVEFERELLGITKASLATESFISAASFQETTRVLTEAAVAGKRDELRGLKENVIVGRLIPAGTGFAYHQNRHKHRLVDDVVAKLSEEDEATIADEFVMTADDASASLAEMLNMADDAE</sequence>
<reference key="1">
    <citation type="journal article" date="2007" name="Genome Biol.">
        <title>Characterization and modeling of the Haemophilus influenzae core and supragenomes based on the complete genomic sequences of Rd and 12 clinical nontypeable strains.</title>
        <authorList>
            <person name="Hogg J.S."/>
            <person name="Hu F.Z."/>
            <person name="Janto B."/>
            <person name="Boissy R."/>
            <person name="Hayes J."/>
            <person name="Keefe R."/>
            <person name="Post J.C."/>
            <person name="Ehrlich G.D."/>
        </authorList>
    </citation>
    <scope>NUCLEOTIDE SEQUENCE [LARGE SCALE GENOMIC DNA]</scope>
    <source>
        <strain>PittEE</strain>
    </source>
</reference>
<organism>
    <name type="scientific">Haemophilus influenzae (strain PittEE)</name>
    <dbReference type="NCBI Taxonomy" id="374930"/>
    <lineage>
        <taxon>Bacteria</taxon>
        <taxon>Pseudomonadati</taxon>
        <taxon>Pseudomonadota</taxon>
        <taxon>Gammaproteobacteria</taxon>
        <taxon>Pasteurellales</taxon>
        <taxon>Pasteurellaceae</taxon>
        <taxon>Haemophilus</taxon>
    </lineage>
</organism>
<gene>
    <name evidence="1" type="primary">rpoC</name>
    <name type="ordered locus">CGSHiEE_00430</name>
</gene>
<proteinExistence type="inferred from homology"/>
<protein>
    <recommendedName>
        <fullName evidence="1">DNA-directed RNA polymerase subunit beta'</fullName>
        <shortName evidence="1">RNAP subunit beta'</shortName>
        <ecNumber evidence="1">2.7.7.6</ecNumber>
    </recommendedName>
    <alternativeName>
        <fullName evidence="1">RNA polymerase subunit beta'</fullName>
    </alternativeName>
    <alternativeName>
        <fullName evidence="1">Transcriptase subunit beta'</fullName>
    </alternativeName>
</protein>
<evidence type="ECO:0000255" key="1">
    <source>
        <dbReference type="HAMAP-Rule" id="MF_01322"/>
    </source>
</evidence>
<feature type="chain" id="PRO_0000353377" description="DNA-directed RNA polymerase subunit beta'">
    <location>
        <begin position="1"/>
        <end position="1416"/>
    </location>
</feature>
<feature type="binding site" evidence="1">
    <location>
        <position position="71"/>
    </location>
    <ligand>
        <name>Zn(2+)</name>
        <dbReference type="ChEBI" id="CHEBI:29105"/>
        <label>1</label>
    </ligand>
</feature>
<feature type="binding site" evidence="1">
    <location>
        <position position="73"/>
    </location>
    <ligand>
        <name>Zn(2+)</name>
        <dbReference type="ChEBI" id="CHEBI:29105"/>
        <label>1</label>
    </ligand>
</feature>
<feature type="binding site" evidence="1">
    <location>
        <position position="86"/>
    </location>
    <ligand>
        <name>Zn(2+)</name>
        <dbReference type="ChEBI" id="CHEBI:29105"/>
        <label>1</label>
    </ligand>
</feature>
<feature type="binding site" evidence="1">
    <location>
        <position position="89"/>
    </location>
    <ligand>
        <name>Zn(2+)</name>
        <dbReference type="ChEBI" id="CHEBI:29105"/>
        <label>1</label>
    </ligand>
</feature>
<feature type="binding site" evidence="1">
    <location>
        <position position="461"/>
    </location>
    <ligand>
        <name>Mg(2+)</name>
        <dbReference type="ChEBI" id="CHEBI:18420"/>
    </ligand>
</feature>
<feature type="binding site" evidence="1">
    <location>
        <position position="463"/>
    </location>
    <ligand>
        <name>Mg(2+)</name>
        <dbReference type="ChEBI" id="CHEBI:18420"/>
    </ligand>
</feature>
<feature type="binding site" evidence="1">
    <location>
        <position position="465"/>
    </location>
    <ligand>
        <name>Mg(2+)</name>
        <dbReference type="ChEBI" id="CHEBI:18420"/>
    </ligand>
</feature>
<feature type="binding site" evidence="1">
    <location>
        <position position="815"/>
    </location>
    <ligand>
        <name>Zn(2+)</name>
        <dbReference type="ChEBI" id="CHEBI:29105"/>
        <label>2</label>
    </ligand>
</feature>
<feature type="binding site" evidence="1">
    <location>
        <position position="889"/>
    </location>
    <ligand>
        <name>Zn(2+)</name>
        <dbReference type="ChEBI" id="CHEBI:29105"/>
        <label>2</label>
    </ligand>
</feature>
<feature type="binding site" evidence="1">
    <location>
        <position position="896"/>
    </location>
    <ligand>
        <name>Zn(2+)</name>
        <dbReference type="ChEBI" id="CHEBI:29105"/>
        <label>2</label>
    </ligand>
</feature>
<feature type="binding site" evidence="1">
    <location>
        <position position="899"/>
    </location>
    <ligand>
        <name>Zn(2+)</name>
        <dbReference type="ChEBI" id="CHEBI:29105"/>
        <label>2</label>
    </ligand>
</feature>
<name>RPOC_HAEIE</name>
<comment type="function">
    <text evidence="1">DNA-dependent RNA polymerase catalyzes the transcription of DNA into RNA using the four ribonucleoside triphosphates as substrates.</text>
</comment>
<comment type="catalytic activity">
    <reaction evidence="1">
        <text>RNA(n) + a ribonucleoside 5'-triphosphate = RNA(n+1) + diphosphate</text>
        <dbReference type="Rhea" id="RHEA:21248"/>
        <dbReference type="Rhea" id="RHEA-COMP:14527"/>
        <dbReference type="Rhea" id="RHEA-COMP:17342"/>
        <dbReference type="ChEBI" id="CHEBI:33019"/>
        <dbReference type="ChEBI" id="CHEBI:61557"/>
        <dbReference type="ChEBI" id="CHEBI:140395"/>
        <dbReference type="EC" id="2.7.7.6"/>
    </reaction>
</comment>
<comment type="cofactor">
    <cofactor evidence="1">
        <name>Mg(2+)</name>
        <dbReference type="ChEBI" id="CHEBI:18420"/>
    </cofactor>
    <text evidence="1">Binds 1 Mg(2+) ion per subunit.</text>
</comment>
<comment type="cofactor">
    <cofactor evidence="1">
        <name>Zn(2+)</name>
        <dbReference type="ChEBI" id="CHEBI:29105"/>
    </cofactor>
    <text evidence="1">Binds 2 Zn(2+) ions per subunit.</text>
</comment>
<comment type="subunit">
    <text evidence="1">The RNAP catalytic core consists of 2 alpha, 1 beta, 1 beta' and 1 omega subunit. When a sigma factor is associated with the core the holoenzyme is formed, which can initiate transcription.</text>
</comment>
<comment type="similarity">
    <text evidence="1">Belongs to the RNA polymerase beta' chain family.</text>
</comment>
<accession>A5U9X9</accession>
<dbReference type="EC" id="2.7.7.6" evidence="1"/>
<dbReference type="EMBL" id="CP000671">
    <property type="protein sequence ID" value="ABQ97580.1"/>
    <property type="molecule type" value="Genomic_DNA"/>
</dbReference>
<dbReference type="SMR" id="A5U9X9"/>
<dbReference type="KEGG" id="hip:CGSHiEE_00430"/>
<dbReference type="HOGENOM" id="CLU_000524_3_1_6"/>
<dbReference type="GO" id="GO:0000428">
    <property type="term" value="C:DNA-directed RNA polymerase complex"/>
    <property type="evidence" value="ECO:0007669"/>
    <property type="project" value="UniProtKB-KW"/>
</dbReference>
<dbReference type="GO" id="GO:0003677">
    <property type="term" value="F:DNA binding"/>
    <property type="evidence" value="ECO:0007669"/>
    <property type="project" value="UniProtKB-UniRule"/>
</dbReference>
<dbReference type="GO" id="GO:0003899">
    <property type="term" value="F:DNA-directed RNA polymerase activity"/>
    <property type="evidence" value="ECO:0007669"/>
    <property type="project" value="UniProtKB-UniRule"/>
</dbReference>
<dbReference type="GO" id="GO:0000287">
    <property type="term" value="F:magnesium ion binding"/>
    <property type="evidence" value="ECO:0007669"/>
    <property type="project" value="UniProtKB-UniRule"/>
</dbReference>
<dbReference type="GO" id="GO:0008270">
    <property type="term" value="F:zinc ion binding"/>
    <property type="evidence" value="ECO:0007669"/>
    <property type="project" value="UniProtKB-UniRule"/>
</dbReference>
<dbReference type="GO" id="GO:0006351">
    <property type="term" value="P:DNA-templated transcription"/>
    <property type="evidence" value="ECO:0007669"/>
    <property type="project" value="UniProtKB-UniRule"/>
</dbReference>
<dbReference type="CDD" id="cd02655">
    <property type="entry name" value="RNAP_beta'_C"/>
    <property type="match status" value="1"/>
</dbReference>
<dbReference type="CDD" id="cd01609">
    <property type="entry name" value="RNAP_beta'_N"/>
    <property type="match status" value="1"/>
</dbReference>
<dbReference type="FunFam" id="1.10.132.30:FF:000003">
    <property type="entry name" value="DNA-directed RNA polymerase subunit beta"/>
    <property type="match status" value="1"/>
</dbReference>
<dbReference type="FunFam" id="1.10.150.390:FF:000002">
    <property type="entry name" value="DNA-directed RNA polymerase subunit beta"/>
    <property type="match status" value="1"/>
</dbReference>
<dbReference type="FunFam" id="1.10.40.90:FF:000001">
    <property type="entry name" value="DNA-directed RNA polymerase subunit beta"/>
    <property type="match status" value="1"/>
</dbReference>
<dbReference type="FunFam" id="4.10.860.120:FF:000001">
    <property type="entry name" value="DNA-directed RNA polymerase subunit beta"/>
    <property type="match status" value="1"/>
</dbReference>
<dbReference type="Gene3D" id="1.10.132.30">
    <property type="match status" value="1"/>
</dbReference>
<dbReference type="Gene3D" id="1.10.150.390">
    <property type="match status" value="1"/>
</dbReference>
<dbReference type="Gene3D" id="1.10.1790.20">
    <property type="match status" value="1"/>
</dbReference>
<dbReference type="Gene3D" id="1.10.40.90">
    <property type="match status" value="1"/>
</dbReference>
<dbReference type="Gene3D" id="2.40.40.20">
    <property type="match status" value="1"/>
</dbReference>
<dbReference type="Gene3D" id="2.40.50.100">
    <property type="match status" value="3"/>
</dbReference>
<dbReference type="Gene3D" id="4.10.860.120">
    <property type="entry name" value="RNA polymerase II, clamp domain"/>
    <property type="match status" value="1"/>
</dbReference>
<dbReference type="Gene3D" id="1.10.274.100">
    <property type="entry name" value="RNA polymerase Rpb1, domain 3"/>
    <property type="match status" value="1"/>
</dbReference>
<dbReference type="HAMAP" id="MF_01322">
    <property type="entry name" value="RNApol_bact_RpoC"/>
    <property type="match status" value="1"/>
</dbReference>
<dbReference type="InterPro" id="IPR045867">
    <property type="entry name" value="DNA-dir_RpoC_beta_prime"/>
</dbReference>
<dbReference type="InterPro" id="IPR012754">
    <property type="entry name" value="DNA-dir_RpoC_beta_prime_bact"/>
</dbReference>
<dbReference type="InterPro" id="IPR000722">
    <property type="entry name" value="RNA_pol_asu"/>
</dbReference>
<dbReference type="InterPro" id="IPR006592">
    <property type="entry name" value="RNA_pol_N"/>
</dbReference>
<dbReference type="InterPro" id="IPR007080">
    <property type="entry name" value="RNA_pol_Rpb1_1"/>
</dbReference>
<dbReference type="InterPro" id="IPR007066">
    <property type="entry name" value="RNA_pol_Rpb1_3"/>
</dbReference>
<dbReference type="InterPro" id="IPR042102">
    <property type="entry name" value="RNA_pol_Rpb1_3_sf"/>
</dbReference>
<dbReference type="InterPro" id="IPR007083">
    <property type="entry name" value="RNA_pol_Rpb1_4"/>
</dbReference>
<dbReference type="InterPro" id="IPR007081">
    <property type="entry name" value="RNA_pol_Rpb1_5"/>
</dbReference>
<dbReference type="InterPro" id="IPR044893">
    <property type="entry name" value="RNA_pol_Rpb1_clamp_domain"/>
</dbReference>
<dbReference type="InterPro" id="IPR038120">
    <property type="entry name" value="Rpb1_funnel_sf"/>
</dbReference>
<dbReference type="NCBIfam" id="TIGR02386">
    <property type="entry name" value="rpoC_TIGR"/>
    <property type="match status" value="1"/>
</dbReference>
<dbReference type="PANTHER" id="PTHR19376">
    <property type="entry name" value="DNA-DIRECTED RNA POLYMERASE"/>
    <property type="match status" value="1"/>
</dbReference>
<dbReference type="PANTHER" id="PTHR19376:SF54">
    <property type="entry name" value="DNA-DIRECTED RNA POLYMERASE SUBUNIT BETA"/>
    <property type="match status" value="1"/>
</dbReference>
<dbReference type="Pfam" id="PF04997">
    <property type="entry name" value="RNA_pol_Rpb1_1"/>
    <property type="match status" value="1"/>
</dbReference>
<dbReference type="Pfam" id="PF00623">
    <property type="entry name" value="RNA_pol_Rpb1_2"/>
    <property type="match status" value="2"/>
</dbReference>
<dbReference type="Pfam" id="PF04983">
    <property type="entry name" value="RNA_pol_Rpb1_3"/>
    <property type="match status" value="1"/>
</dbReference>
<dbReference type="Pfam" id="PF05000">
    <property type="entry name" value="RNA_pol_Rpb1_4"/>
    <property type="match status" value="1"/>
</dbReference>
<dbReference type="Pfam" id="PF04998">
    <property type="entry name" value="RNA_pol_Rpb1_5"/>
    <property type="match status" value="1"/>
</dbReference>
<dbReference type="SMART" id="SM00663">
    <property type="entry name" value="RPOLA_N"/>
    <property type="match status" value="1"/>
</dbReference>
<dbReference type="SUPFAM" id="SSF64484">
    <property type="entry name" value="beta and beta-prime subunits of DNA dependent RNA-polymerase"/>
    <property type="match status" value="1"/>
</dbReference>
<keyword id="KW-0240">DNA-directed RNA polymerase</keyword>
<keyword id="KW-0460">Magnesium</keyword>
<keyword id="KW-0479">Metal-binding</keyword>
<keyword id="KW-0548">Nucleotidyltransferase</keyword>
<keyword id="KW-0804">Transcription</keyword>
<keyword id="KW-0808">Transferase</keyword>
<keyword id="KW-0862">Zinc</keyword>